<feature type="chain" id="PRO_0000446191" description="Inclusion membrane protein G">
    <location>
        <begin position="1"/>
        <end position="167"/>
    </location>
</feature>
<feature type="transmembrane region" description="Helical" evidence="1">
    <location>
        <begin position="33"/>
        <end position="57"/>
    </location>
</feature>
<feature type="transmembrane region" description="Helical" evidence="1">
    <location>
        <begin position="63"/>
        <end position="88"/>
    </location>
</feature>
<feature type="region of interest" description="Sufficient for interaction with human 14-3-3 beta protein" evidence="5">
    <location>
        <begin position="94"/>
        <end position="167"/>
    </location>
</feature>
<feature type="region of interest" description="Disordered" evidence="2">
    <location>
        <begin position="97"/>
        <end position="167"/>
    </location>
</feature>
<feature type="short sequence motif" description="Phosphorylation-dependent binding motif" evidence="11">
    <location>
        <begin position="161"/>
        <end position="166"/>
    </location>
</feature>
<feature type="compositionally biased region" description="Low complexity" evidence="2">
    <location>
        <begin position="122"/>
        <end position="135"/>
    </location>
</feature>
<feature type="site" description="Interacts with 14-3-3 beta" evidence="11">
    <location>
        <position position="166"/>
    </location>
</feature>
<feature type="modified residue" description="Phosphoserine" evidence="11">
    <location>
        <position position="166"/>
    </location>
</feature>
<feature type="mutagenesis site" description="2 to 3-fold decrease of in vitro binding to 14-3-3 beta." evidence="5">
    <original>S</original>
    <variation>A</variation>
    <location>
        <position position="164"/>
    </location>
</feature>
<feature type="mutagenesis site" description="Loss of binding to 14-3-3 beta in vitro." evidence="5">
    <original>S</original>
    <variation>A</variation>
    <location>
        <position position="166"/>
    </location>
</feature>
<reference key="1">
    <citation type="journal article" date="1999" name="Mol. Microbiol.">
        <title>Identification and characterization of a Chlamydia trachomatis early operon encoding four novel inclusion membrane proteins.</title>
        <authorList>
            <person name="Scidmore-Carlson M.A."/>
            <person name="Shaw E.I."/>
            <person name="Dooley C.A."/>
            <person name="Fischer E.R."/>
            <person name="Hackstadt T."/>
        </authorList>
    </citation>
    <scope>NUCLEOTIDE SEQUENCE [GENOMIC DNA]</scope>
    <scope>FUNCTION</scope>
    <scope>SUBCELLULAR LOCATION</scope>
    <scope>DEVELOPMENTAL STAGE</scope>
    <scope>INDUCTION</scope>
    <source>
        <strain>ATCC VR-902B / DSM 19102 / 434/Bu</strain>
    </source>
</reference>
<reference key="2">
    <citation type="journal article" date="2008" name="Genome Res.">
        <title>Chlamydia trachomatis: genome sequence analysis of lymphogranuloma venereum isolates.</title>
        <authorList>
            <person name="Thomson N.R."/>
            <person name="Holden M.T.G."/>
            <person name="Carder C."/>
            <person name="Lennard N."/>
            <person name="Lockey S.J."/>
            <person name="Marsh P."/>
            <person name="Skipp P."/>
            <person name="O'Connor C.D."/>
            <person name="Goodhead I."/>
            <person name="Norbertzcak H."/>
            <person name="Harris B."/>
            <person name="Ormond D."/>
            <person name="Rance R."/>
            <person name="Quail M.A."/>
            <person name="Parkhill J."/>
            <person name="Stephens R.S."/>
            <person name="Clarke I.N."/>
        </authorList>
    </citation>
    <scope>NUCLEOTIDE SEQUENCE [LARGE SCALE GENOMIC DNA]</scope>
    <source>
        <strain>ATCC VR-902B / DSM 19102 / 434/Bu</strain>
    </source>
</reference>
<reference key="3">
    <citation type="journal article" date="1999" name="Cell. Microbiol.">
        <title>The Chlamydia trachomatis IncA protein is required for homotypic vesicle fusion.</title>
        <authorList>
            <person name="Hackstadt T."/>
            <person name="Scidmore-Carlson M.A."/>
            <person name="Shaw E.I."/>
            <person name="Fischer E.R."/>
        </authorList>
    </citation>
    <scope>SUBCELLULAR LOCATION</scope>
    <scope>TOPOLOGY</scope>
    <source>
        <strain>ATCC VR-902B / DSM 19102 / 434/Bu</strain>
    </source>
</reference>
<reference key="4">
    <citation type="journal article" date="2001" name="Mol. Microbiol.">
        <title>Mammalian 14-3-3beta associates with the Chlamydia trachomatis inclusion membrane via its interaction with IncG.</title>
        <authorList>
            <person name="Scidmore M.A."/>
            <person name="Hackstadt T."/>
        </authorList>
    </citation>
    <scope>INTERACTION WITH HUMAN 14-3-3 BETA</scope>
    <scope>SUBCELLULAR LOCATION</scope>
    <scope>PROBABLE PHOSPHORYLATION AT SER-166</scope>
    <scope>DOMAIN</scope>
    <scope>MUTAGENESIS OF SER-164 AND SER-166</scope>
    <source>
        <strain>ATCC VR-902B / DSM 19102 / 434/Bu</strain>
    </source>
</reference>
<reference key="5">
    <citation type="journal article" date="2002" name="Infect. Immun.">
        <title>Inhibition of fusion of Chlamydia trachomatis inclusions at 32 degrees C correlates with restricted export of IncA.</title>
        <authorList>
            <person name="Fields K.A."/>
            <person name="Fischer E.R."/>
            <person name="Hackstadt T."/>
        </authorList>
    </citation>
    <scope>SUBCELLULAR LOCATION</scope>
    <source>
        <strain>ATCC VR-902B / DSM 19102 / 434/Bu</strain>
    </source>
</reference>
<reference key="6">
    <citation type="journal article" date="2003" name="Infect. Immun.">
        <title>Identification of two eukaryote-like serine/threonine kinases encoded by Chlamydia trachomatis serovar L2 and characterization of interacting partners of Pkn1.</title>
        <authorList>
            <person name="Verma A."/>
            <person name="Maurelli A.T."/>
        </authorList>
    </citation>
    <scope>INTERACTION WITH PKN1</scope>
    <scope>PHOSPHORYLATION BY PKN1</scope>
    <source>
        <strain>L2</strain>
    </source>
</reference>
<reference key="7">
    <citation type="journal article" date="2003" name="Mol. Microbiol.">
        <title>Chlamydia trachomatis type III secretion: evidence for a functional apparatus during early-cycle development.</title>
        <authorList>
            <person name="Fields K.A."/>
            <person name="Mead D.J."/>
            <person name="Dooley C.A."/>
            <person name="Hackstadt T."/>
        </authorList>
    </citation>
    <scope>SUBCELLULAR LOCATION</scope>
    <scope>DEVELOPMENTAL STAGE</scope>
    <scope>INDUCTION</scope>
    <scope>PROBABLE EXPORT BY A TYPE III SECRETION SYSTEM</scope>
    <source>
        <strain>L2</strain>
    </source>
</reference>
<proteinExistence type="evidence at protein level"/>
<sequence>MICCDKVLSSVQSMPVIDKCSVTKCLQTAKQAVVLALSLFAVFASGSLSILSAAVLFSGTAAVLPYLLILTTALLGCVYAVIVLLRSLSAVVQSCKKRSPEEIEGAARPSDQQESGGRLSEESASPQASPTSSTLRLESAFRSIGDSVSGAFDDINKDNSRSRSRSF</sequence>
<organism>
    <name type="scientific">Chlamydia trachomatis serovar L2 (strain ATCC VR-902B / DSM 19102 / 434/Bu)</name>
    <dbReference type="NCBI Taxonomy" id="471472"/>
    <lineage>
        <taxon>Bacteria</taxon>
        <taxon>Pseudomonadati</taxon>
        <taxon>Chlamydiota</taxon>
        <taxon>Chlamydiia</taxon>
        <taxon>Chlamydiales</taxon>
        <taxon>Chlamydiaceae</taxon>
        <taxon>Chlamydia/Chlamydophila group</taxon>
        <taxon>Chlamydia</taxon>
    </lineage>
</organism>
<keyword id="KW-1043">Host membrane</keyword>
<keyword id="KW-0472">Membrane</keyword>
<keyword id="KW-0597">Phosphoprotein</keyword>
<keyword id="KW-0964">Secreted</keyword>
<keyword id="KW-0812">Transmembrane</keyword>
<keyword id="KW-1133">Transmembrane helix</keyword>
<gene>
    <name evidence="9" type="primary">incG</name>
    <name type="ordered locus">CTL0373</name>
</gene>
<comment type="function">
    <text evidence="10">Inclusion membrane protein probably involved in early modification events of the chlamydial inclusion.</text>
</comment>
<comment type="subunit">
    <text evidence="5 8">In infected HeLa cells colocalizes with host 14-3-3 protein (YWHAB); phosphorylation of Ser-166 is probably required (PubMed:11260479). Interacts with Pkn1 (PubMed:14500499).</text>
</comment>
<comment type="subcellular location">
    <subcellularLocation>
        <location evidence="10">Secreted</location>
    </subcellularLocation>
    <subcellularLocation>
        <location evidence="3 4 6">Host vacuole</location>
        <location evidence="3 4 6">Host pathogen-containing vacuole</location>
        <location evidence="3 4 6">Host pathogen-containing vacuole membrane</location>
        <topology evidence="1">Multi-pass membrane protein</topology>
    </subcellularLocation>
    <text evidence="3 4 5 6 10 12">Secreted, probably by a type III secretion system (Probable). Localized in the inclusion membrane (PubMed:10447885, PubMed:11207546, PubMed:11260479, PubMed:12065525). Inclusion membrane staining is punctate (PubMed:10447885). The C-terminus faces the host cytosol (PubMed:11207546).</text>
</comment>
<comment type="developmental stage">
    <text evidence="3 7">Present in reticulate bodies (RB) not detected in elementary bodies (EB) (at protein level) (PubMed:10447885). Found only in reticulate bodies in infected HeLa cells (PubMed:12694613).</text>
</comment>
<comment type="induction">
    <text evidence="3 7">Cotranscribed with incD, incE and incG within 2 hours after internalization by host cells (PubMed:10447885). Detected at 4 hours post-infection in HeLa cells (at protein level) (PubMed:12694613).</text>
</comment>
<comment type="PTM">
    <text evidence="5 8">Phosphorylated, possibly at more than one position, in infected HeLa cells (PubMed:11260479). Phosphorylated by chlamydial kinase Pnk1 (PubMed:14500499).</text>
</comment>
<dbReference type="EMBL" id="AF151374">
    <property type="protein sequence ID" value="AAD43977.1"/>
    <property type="molecule type" value="Genomic_DNA"/>
</dbReference>
<dbReference type="EMBL" id="AM884176">
    <property type="protein sequence ID" value="CAP03813.1"/>
    <property type="molecule type" value="Genomic_DNA"/>
</dbReference>
<dbReference type="RefSeq" id="WP_009873573.1">
    <property type="nucleotide sequence ID" value="NC_010287.1"/>
</dbReference>
<dbReference type="RefSeq" id="YP_001654457.1">
    <property type="nucleotide sequence ID" value="NC_010287.1"/>
</dbReference>
<dbReference type="iPTMnet" id="A0A0H3MGR4"/>
<dbReference type="KEGG" id="ctb:CTL0373"/>
<dbReference type="PATRIC" id="fig|471472.4.peg.405"/>
<dbReference type="HOGENOM" id="CLU_1701112_0_0_0"/>
<dbReference type="Proteomes" id="UP001154402">
    <property type="component" value="Chromosome"/>
</dbReference>
<dbReference type="GO" id="GO:0005576">
    <property type="term" value="C:extracellular region"/>
    <property type="evidence" value="ECO:0007669"/>
    <property type="project" value="UniProtKB-SubCell"/>
</dbReference>
<dbReference type="GO" id="GO:0033644">
    <property type="term" value="C:host cell membrane"/>
    <property type="evidence" value="ECO:0007669"/>
    <property type="project" value="UniProtKB-KW"/>
</dbReference>
<dbReference type="GO" id="GO:0140221">
    <property type="term" value="C:pathogen-containing vacuole membrane"/>
    <property type="evidence" value="ECO:0000314"/>
    <property type="project" value="UniProtKB"/>
</dbReference>
<evidence type="ECO:0000255" key="1"/>
<evidence type="ECO:0000256" key="2">
    <source>
        <dbReference type="SAM" id="MobiDB-lite"/>
    </source>
</evidence>
<evidence type="ECO:0000269" key="3">
    <source>
    </source>
</evidence>
<evidence type="ECO:0000269" key="4">
    <source>
    </source>
</evidence>
<evidence type="ECO:0000269" key="5">
    <source>
    </source>
</evidence>
<evidence type="ECO:0000269" key="6">
    <source>
    </source>
</evidence>
<evidence type="ECO:0000269" key="7">
    <source>
    </source>
</evidence>
<evidence type="ECO:0000269" key="8">
    <source>
    </source>
</evidence>
<evidence type="ECO:0000303" key="9">
    <source>
    </source>
</evidence>
<evidence type="ECO:0000305" key="10">
    <source>
    </source>
</evidence>
<evidence type="ECO:0000305" key="11">
    <source>
    </source>
</evidence>
<evidence type="ECO:0000305" key="12">
    <source>
    </source>
</evidence>
<protein>
    <recommendedName>
        <fullName evidence="9">Inclusion membrane protein G</fullName>
    </recommendedName>
</protein>
<accession>A0A0H3MGR4</accession>
<accession>O84120</accession>
<accession>Q9RPP8</accession>
<name>INCG_CHLT2</name>